<keyword id="KW-1003">Cell membrane</keyword>
<keyword id="KW-0963">Cytoplasm</keyword>
<keyword id="KW-0206">Cytoskeleton</keyword>
<keyword id="KW-0967">Endosome</keyword>
<keyword id="KW-0472">Membrane</keyword>
<keyword id="KW-0539">Nucleus</keyword>
<keyword id="KW-0597">Phosphoprotein</keyword>
<keyword id="KW-0628">Postsynaptic cell membrane</keyword>
<keyword id="KW-1185">Reference proteome</keyword>
<keyword id="KW-0770">Synapse</keyword>
<keyword id="KW-0812">Transmembrane</keyword>
<keyword id="KW-1133">Transmembrane helix</keyword>
<feature type="chain" id="PRO_0000370251" description="Transmembrane and ubiquitin-like domain-containing protein 1">
    <location>
        <begin position="1"/>
        <end position="245"/>
    </location>
</feature>
<feature type="chain" id="PRO_0000435490" description="iHOPS">
    <location>
        <begin status="unknown"/>
        <end position="245"/>
    </location>
</feature>
<feature type="transmembrane region" description="Helical" evidence="3">
    <location>
        <begin position="11"/>
        <end position="31"/>
    </location>
</feature>
<feature type="transmembrane region" description="Helical" evidence="3">
    <location>
        <begin position="194"/>
        <end position="214"/>
    </location>
</feature>
<feature type="transmembrane region" description="Helical" evidence="3">
    <location>
        <begin position="219"/>
        <end position="239"/>
    </location>
</feature>
<feature type="domain" description="Ubiquitin-like" evidence="4">
    <location>
        <begin position="102"/>
        <end position="175"/>
    </location>
</feature>
<feature type="region of interest" description="Required to release iHOPS from membranes" evidence="2">
    <location>
        <begin position="2"/>
        <end position="30"/>
    </location>
</feature>
<feature type="region of interest" description="Disordered" evidence="5">
    <location>
        <begin position="34"/>
        <end position="100"/>
    </location>
</feature>
<feature type="compositionally biased region" description="Polar residues" evidence="5">
    <location>
        <begin position="34"/>
        <end position="51"/>
    </location>
</feature>
<feature type="modified residue" description="Phosphoserine" evidence="1">
    <location>
        <position position="73"/>
    </location>
</feature>
<feature type="modified residue" description="Phosphoserine" evidence="1">
    <location>
        <position position="97"/>
    </location>
</feature>
<feature type="modified residue" description="Phosphoserine" evidence="1">
    <location>
        <position position="126"/>
    </location>
</feature>
<sequence length="245" mass="26349">MALIEGVGDEVTVLFSVLACLLVLALAWVSTHTTESTDPLPQSSGTTTPAQPSEAMTAIDSIREEAPGAESPSLRHRGPSAQPEPEAGVTASTPPDSPQEPLLLRLKFLNDSEQVARAWPQDTIGSLKRTQFPGREQQVRLIYQGQLLGDDTQTLGSLHLPPNCVLHCHVSTRVGPPHPPCPPGSEPGPSGLEIGSLLLPLLLLLLLLLWYCQIQYRPFFPLTATLGLAGFTLLLSLLAFAMYRP</sequence>
<gene>
    <name type="primary">Tmub1</name>
    <name type="synonym">Hops</name>
</gene>
<comment type="function">
    <text evidence="1 2 8 9">Involved in sterol-regulated ubiquitination and degradation of HMG-CoA reductase HMGCR (By similarity). Involved in positive regulation of AMPA-selective glutamate receptor GRIA2 recycling to the cell surface (PubMed:18665261). Acts as a negative regulator of hepatocyte growth during regeneration (PubMed:22426572).</text>
</comment>
<comment type="function">
    <molecule>iHOPS</molecule>
    <text evidence="2">May contribute to the regulation of translation during cell-cycle progression. May contribute to the regulation of cell proliferation (By similarity). May be involved in centrosome assembly. Modulates stabilization and nucleolar localization of tumor suppressor CDKN2A and enhances association between CDKN2A and NPM1 (By similarity).</text>
</comment>
<comment type="subunit">
    <text evidence="1 2 7 9 10">Interacts with EEF1A1, GRIA2, GRIP1 (By similarity). Interacts with CAMLG, TUBG1. Interacts with NPM1 and CDKN2A; TMUB1 can enhance interaction between NPM1 and CDKN2A and is proposed to bridge the proteins; proposed to be mediated by iHOPS (PubMed:18418082, PubMed:22426572, PubMed:22890319). Interacts with ERLIN2 and AMFR; TMUB1 promotes the interaction of ERLIN2 with AMFR (By similarity).</text>
</comment>
<comment type="subcellular location">
    <subcellularLocation>
        <location evidence="11 13">Membrane</location>
        <topology evidence="13">Multi-pass membrane protein</topology>
    </subcellularLocation>
    <subcellularLocation>
        <location evidence="2">Postsynaptic cell membrane</location>
    </subcellularLocation>
    <subcellularLocation>
        <location evidence="8">Recycling endosome</location>
    </subcellularLocation>
    <subcellularLocation>
        <location evidence="6 9">Cytoplasm</location>
    </subcellularLocation>
    <subcellularLocation>
        <location evidence="7">Cytoplasm</location>
        <location evidence="7">Cytoskeleton</location>
        <location evidence="7">Microtubule organizing center</location>
        <location evidence="7">Centrosome</location>
    </subcellularLocation>
    <subcellularLocation>
        <location evidence="6">Nucleus</location>
    </subcellularLocation>
    <subcellularLocation>
        <location evidence="10">Nucleus</location>
        <location evidence="10">Nucleolus</location>
    </subcellularLocation>
    <text evidence="8">Localized to neuronal soma and dendrites (PubMed:18665261).</text>
</comment>
<comment type="subcellular location">
    <molecule>iHOPS</molecule>
    <subcellularLocation>
        <location evidence="2 11">Cytoplasm</location>
    </subcellularLocation>
    <subcellularLocation>
        <location evidence="2">Cytoplasm</location>
        <location evidence="2">Cytoskeleton</location>
        <location evidence="2">Microtubule organizing center</location>
        <location evidence="2">Centrosome</location>
    </subcellularLocation>
    <subcellularLocation>
        <location evidence="2">Nucleus</location>
        <location evidence="2">Nucleolus</location>
    </subcellularLocation>
    <subcellularLocation>
        <location evidence="2">Nucleus</location>
    </subcellularLocation>
    <text evidence="2 6">iHOPS is proposed to be the shuttling form across different cellular compartments (By similarity). XPO1-dependent exported from the nucleus in dividing cells. Predominantly nuclear during growth arrest (PubMed:16014383).</text>
</comment>
<comment type="induction">
    <text evidence="6">Up-regulated in regenerating liver.</text>
</comment>
<comment type="PTM">
    <molecule>iHOPS</molecule>
    <text evidence="11">Processed by regulated intramembrane proteolysis (RIP) in the N-terminus to release iHOPS from membranes.</text>
</comment>
<reference key="1">
    <citation type="journal article" date="2005" name="J. Cell Sci.">
        <title>HOPS: a novel cAMP-dependent shuttling protein involved in protein synthesis regulation.</title>
        <authorList>
            <person name="Della Fazia M.A."/>
            <person name="Castelli M."/>
            <person name="Bartoli D."/>
            <person name="Pieroni S."/>
            <person name="Pettirossi V."/>
            <person name="Piobbico D."/>
            <person name="Viola-Magni M."/>
            <person name="Servillo G."/>
        </authorList>
    </citation>
    <scope>NUCLEOTIDE SEQUENCE [MRNA]</scope>
    <scope>INDUCTION</scope>
    <scope>SUBCELLULAR LOCATION</scope>
    <source>
        <strain>Sprague-Dawley</strain>
        <tissue>Liver</tissue>
    </source>
</reference>
<reference key="2">
    <citation type="submission" date="2005-07" db="EMBL/GenBank/DDBJ databases">
        <authorList>
            <person name="Mural R.J."/>
            <person name="Adams M.D."/>
            <person name="Myers E.W."/>
            <person name="Smith H.O."/>
            <person name="Venter J.C."/>
        </authorList>
    </citation>
    <scope>NUCLEOTIDE SEQUENCE [LARGE SCALE GENOMIC DNA]</scope>
    <source>
        <strain>Brown Norway</strain>
    </source>
</reference>
<reference key="3">
    <citation type="journal article" date="2008" name="Cell Cycle">
        <title>HOPS is an essential constituent of centrosome assembly.</title>
        <authorList>
            <person name="Pieroni S."/>
            <person name="Della Fazia M.A."/>
            <person name="Castelli M."/>
            <person name="Piobbico D."/>
            <person name="Bartoli D."/>
            <person name="Brunacci C."/>
            <person name="Bellet M.M."/>
            <person name="Viola-Magni M."/>
            <person name="Servillo G."/>
        </authorList>
    </citation>
    <scope>SUBCELLULAR LOCATION</scope>
    <scope>INTERACTION WITH TUBG1</scope>
</reference>
<reference key="4">
    <citation type="journal article" date="2008" name="PLoS ONE">
        <title>Transmembrane and ubiquitin-like domain-containing protein 1 (Tmub1/HOPS) facilitates surface expression of GluR2-containing AMPA receptors.</title>
        <authorList>
            <person name="Yang H."/>
            <person name="Takagi H."/>
            <person name="Konishi Y."/>
            <person name="Ageta H."/>
            <person name="Ikegami K."/>
            <person name="Yao I."/>
            <person name="Sato S."/>
            <person name="Hatanaka K."/>
            <person name="Inokuchi K."/>
            <person name="Seog D.H."/>
            <person name="Setou M."/>
        </authorList>
    </citation>
    <scope>FUNCTION</scope>
    <scope>SUBCELLULAR LOCATION</scope>
</reference>
<reference key="5">
    <citation type="journal article" date="2012" name="Int. J. Mol. Med.">
        <title>IL-6 induction of hepatocyte proliferation through the Tmub1-regulated gene pathway.</title>
        <authorList>
            <person name="Liu M."/>
            <person name="Liu H."/>
            <person name="Wang X."/>
            <person name="Chen P."/>
            <person name="Chen H."/>
        </authorList>
    </citation>
    <scope>FUNCTION</scope>
    <scope>SUBCELLULAR LOCATION</scope>
    <scope>INTERACTION WITH CAMLG</scope>
</reference>
<reference key="6">
    <citation type="journal article" date="2013" name="Oncogene">
        <title>Hepatocyte odd protein shuttling (HOPS) is a bridging protein in the nucleophosmin-p19 Arf network.</title>
        <authorList>
            <person name="Castelli M."/>
            <person name="Pieroni S."/>
            <person name="Brunacci C."/>
            <person name="Piobbico D."/>
            <person name="Bartoli D."/>
            <person name="Bellet M.M."/>
            <person name="Colombo E."/>
            <person name="Pelicci P.G."/>
            <person name="Della Fazia M.A."/>
            <person name="Servillo G."/>
        </authorList>
    </citation>
    <scope>SUBCELLULAR LOCATION</scope>
    <scope>INTERACTION WITH NPM1 AND CDKN2A</scope>
</reference>
<reference key="7">
    <citation type="journal article" date="2014" name="Cell Cycle">
        <title>Different functions of HOPS isoforms in the cell: HOPS shuttling isoform is determined by RIP cleavage system.</title>
        <authorList>
            <person name="Castelli M."/>
            <person name="Piobbico D."/>
            <person name="Bartoli D."/>
            <person name="Pieroni S."/>
            <person name="Brunacci C."/>
            <person name="Bellet M.M."/>
            <person name="Chiacchiaretta M."/>
            <person name="Della Fazia M.A."/>
            <person name="Servillo G."/>
        </authorList>
    </citation>
    <scope>SUBCELLULAR LOCATION (IHOPS)</scope>
    <scope>PROTEOLYTIC CLEAVAGE (IHOPS)</scope>
</reference>
<accession>Q53AQ4</accession>
<organism>
    <name type="scientific">Rattus norvegicus</name>
    <name type="common">Rat</name>
    <dbReference type="NCBI Taxonomy" id="10116"/>
    <lineage>
        <taxon>Eukaryota</taxon>
        <taxon>Metazoa</taxon>
        <taxon>Chordata</taxon>
        <taxon>Craniata</taxon>
        <taxon>Vertebrata</taxon>
        <taxon>Euteleostomi</taxon>
        <taxon>Mammalia</taxon>
        <taxon>Eutheria</taxon>
        <taxon>Euarchontoglires</taxon>
        <taxon>Glires</taxon>
        <taxon>Rodentia</taxon>
        <taxon>Myomorpha</taxon>
        <taxon>Muroidea</taxon>
        <taxon>Muridae</taxon>
        <taxon>Murinae</taxon>
        <taxon>Rattus</taxon>
    </lineage>
</organism>
<dbReference type="EMBL" id="AY603378">
    <property type="protein sequence ID" value="AAU00154.1"/>
    <property type="molecule type" value="mRNA"/>
</dbReference>
<dbReference type="EMBL" id="CH474020">
    <property type="protein sequence ID" value="EDL99355.1"/>
    <property type="molecule type" value="Genomic_DNA"/>
</dbReference>
<dbReference type="RefSeq" id="NP_001073622.1">
    <property type="nucleotide sequence ID" value="NM_001080153.2"/>
</dbReference>
<dbReference type="RefSeq" id="NP_942076.2">
    <property type="nucleotide sequence ID" value="NM_198781.3"/>
</dbReference>
<dbReference type="RefSeq" id="XP_006236007.1">
    <property type="nucleotide sequence ID" value="XM_006235945.5"/>
</dbReference>
<dbReference type="SMR" id="Q53AQ4"/>
<dbReference type="BioGRID" id="263349">
    <property type="interactions" value="2"/>
</dbReference>
<dbReference type="FunCoup" id="Q53AQ4">
    <property type="interactions" value="668"/>
</dbReference>
<dbReference type="IntAct" id="Q53AQ4">
    <property type="interactions" value="2"/>
</dbReference>
<dbReference type="STRING" id="10116.ENSRNOP00000058703"/>
<dbReference type="iPTMnet" id="Q53AQ4"/>
<dbReference type="PhosphoSitePlus" id="Q53AQ4"/>
<dbReference type="PaxDb" id="10116-ENSRNOP00000058703"/>
<dbReference type="GeneID" id="362301"/>
<dbReference type="KEGG" id="rno:362301"/>
<dbReference type="AGR" id="RGD:735120"/>
<dbReference type="CTD" id="83590"/>
<dbReference type="RGD" id="735120">
    <property type="gene designation" value="Tmub1"/>
</dbReference>
<dbReference type="VEuPathDB" id="HostDB:ENSRNOG00000013383"/>
<dbReference type="eggNOG" id="ENOG502QU8U">
    <property type="taxonomic scope" value="Eukaryota"/>
</dbReference>
<dbReference type="InParanoid" id="Q53AQ4"/>
<dbReference type="OrthoDB" id="82430at9989"/>
<dbReference type="PhylomeDB" id="Q53AQ4"/>
<dbReference type="TreeFam" id="TF329265"/>
<dbReference type="PRO" id="PR:Q53AQ4"/>
<dbReference type="Proteomes" id="UP000002494">
    <property type="component" value="Chromosome 4"/>
</dbReference>
<dbReference type="Proteomes" id="UP000234681">
    <property type="component" value="Chromosome 4"/>
</dbReference>
<dbReference type="Bgee" id="ENSRNOG00000013383">
    <property type="expression patterns" value="Expressed in skeletal muscle tissue and 20 other cell types or tissues"/>
</dbReference>
<dbReference type="GO" id="GO:0005813">
    <property type="term" value="C:centrosome"/>
    <property type="evidence" value="ECO:0007669"/>
    <property type="project" value="UniProtKB-SubCell"/>
</dbReference>
<dbReference type="GO" id="GO:0005730">
    <property type="term" value="C:nucleolus"/>
    <property type="evidence" value="ECO:0007669"/>
    <property type="project" value="UniProtKB-SubCell"/>
</dbReference>
<dbReference type="GO" id="GO:0045211">
    <property type="term" value="C:postsynaptic membrane"/>
    <property type="evidence" value="ECO:0007669"/>
    <property type="project" value="UniProtKB-SubCell"/>
</dbReference>
<dbReference type="GO" id="GO:0098944">
    <property type="term" value="C:postsynaptic recycling endosome membrane"/>
    <property type="evidence" value="ECO:0000314"/>
    <property type="project" value="SynGO"/>
</dbReference>
<dbReference type="GO" id="GO:0036503">
    <property type="term" value="P:ERAD pathway"/>
    <property type="evidence" value="ECO:0000266"/>
    <property type="project" value="RGD"/>
</dbReference>
<dbReference type="GO" id="GO:0098884">
    <property type="term" value="P:postsynaptic neurotransmitter receptor internalization"/>
    <property type="evidence" value="ECO:0000314"/>
    <property type="project" value="SynGO"/>
</dbReference>
<dbReference type="CDD" id="cd17131">
    <property type="entry name" value="Ubl_TMUB1"/>
    <property type="match status" value="1"/>
</dbReference>
<dbReference type="FunFam" id="3.10.20.90:FF:000181">
    <property type="entry name" value="transmembrane and ubiquitin-like domain-containing protein 1"/>
    <property type="match status" value="1"/>
</dbReference>
<dbReference type="Gene3D" id="3.10.20.90">
    <property type="entry name" value="Phosphatidylinositol 3-kinase Catalytic Subunit, Chain A, domain 1"/>
    <property type="match status" value="1"/>
</dbReference>
<dbReference type="InterPro" id="IPR040352">
    <property type="entry name" value="TMUB1/2"/>
</dbReference>
<dbReference type="InterPro" id="IPR000626">
    <property type="entry name" value="Ubiquitin-like_dom"/>
</dbReference>
<dbReference type="InterPro" id="IPR029071">
    <property type="entry name" value="Ubiquitin-like_domsf"/>
</dbReference>
<dbReference type="PANTHER" id="PTHR14557">
    <property type="entry name" value="PROTEIN C7ORF21"/>
    <property type="match status" value="1"/>
</dbReference>
<dbReference type="PANTHER" id="PTHR14557:SF3">
    <property type="entry name" value="TRANSMEMBRANE AND UBIQUITIN-LIKE DOMAIN-CONTAINING PROTEIN 1"/>
    <property type="match status" value="1"/>
</dbReference>
<dbReference type="Pfam" id="PF00240">
    <property type="entry name" value="ubiquitin"/>
    <property type="match status" value="1"/>
</dbReference>
<dbReference type="SMART" id="SM00213">
    <property type="entry name" value="UBQ"/>
    <property type="match status" value="1"/>
</dbReference>
<dbReference type="SUPFAM" id="SSF54236">
    <property type="entry name" value="Ubiquitin-like"/>
    <property type="match status" value="1"/>
</dbReference>
<dbReference type="PROSITE" id="PS50053">
    <property type="entry name" value="UBIQUITIN_2"/>
    <property type="match status" value="1"/>
</dbReference>
<protein>
    <recommendedName>
        <fullName>Transmembrane and ubiquitin-like domain-containing protein 1</fullName>
    </recommendedName>
    <alternativeName>
        <fullName>Hepatocyte odd protein shuttling protein</fullName>
    </alternativeName>
    <component>
        <recommendedName>
            <fullName evidence="12">iHOPS</fullName>
        </recommendedName>
    </component>
</protein>
<evidence type="ECO:0000250" key="1">
    <source>
        <dbReference type="UniProtKB" id="Q9BVT8"/>
    </source>
</evidence>
<evidence type="ECO:0000250" key="2">
    <source>
        <dbReference type="UniProtKB" id="Q9JMG3"/>
    </source>
</evidence>
<evidence type="ECO:0000255" key="3"/>
<evidence type="ECO:0000255" key="4">
    <source>
        <dbReference type="PROSITE-ProRule" id="PRU00214"/>
    </source>
</evidence>
<evidence type="ECO:0000256" key="5">
    <source>
        <dbReference type="SAM" id="MobiDB-lite"/>
    </source>
</evidence>
<evidence type="ECO:0000269" key="6">
    <source>
    </source>
</evidence>
<evidence type="ECO:0000269" key="7">
    <source>
    </source>
</evidence>
<evidence type="ECO:0000269" key="8">
    <source>
    </source>
</evidence>
<evidence type="ECO:0000269" key="9">
    <source>
    </source>
</evidence>
<evidence type="ECO:0000269" key="10">
    <source>
    </source>
</evidence>
<evidence type="ECO:0000269" key="11">
    <source>
    </source>
</evidence>
<evidence type="ECO:0000303" key="12">
    <source>
    </source>
</evidence>
<evidence type="ECO:0000305" key="13"/>
<proteinExistence type="evidence at protein level"/>
<name>TMUB1_RAT</name>